<reference key="1">
    <citation type="journal article" date="2009" name="Nature">
        <title>The Sorghum bicolor genome and the diversification of grasses.</title>
        <authorList>
            <person name="Paterson A.H."/>
            <person name="Bowers J.E."/>
            <person name="Bruggmann R."/>
            <person name="Dubchak I."/>
            <person name="Grimwood J."/>
            <person name="Gundlach H."/>
            <person name="Haberer G."/>
            <person name="Hellsten U."/>
            <person name="Mitros T."/>
            <person name="Poliakov A."/>
            <person name="Schmutz J."/>
            <person name="Spannagl M."/>
            <person name="Tang H."/>
            <person name="Wang X."/>
            <person name="Wicker T."/>
            <person name="Bharti A.K."/>
            <person name="Chapman J."/>
            <person name="Feltus F.A."/>
            <person name="Gowik U."/>
            <person name="Grigoriev I.V."/>
            <person name="Lyons E."/>
            <person name="Maher C.A."/>
            <person name="Martis M."/>
            <person name="Narechania A."/>
            <person name="Otillar R.P."/>
            <person name="Penning B.W."/>
            <person name="Salamov A.A."/>
            <person name="Wang Y."/>
            <person name="Zhang L."/>
            <person name="Carpita N.C."/>
            <person name="Freeling M."/>
            <person name="Gingle A.R."/>
            <person name="Hash C.T."/>
            <person name="Keller B."/>
            <person name="Klein P."/>
            <person name="Kresovich S."/>
            <person name="McCann M.C."/>
            <person name="Ming R."/>
            <person name="Peterson D.G."/>
            <person name="Mehboob-ur-Rahman M."/>
            <person name="Ware D."/>
            <person name="Westhoff P."/>
            <person name="Mayer K.F.X."/>
            <person name="Messing J."/>
            <person name="Rokhsar D.S."/>
        </authorList>
    </citation>
    <scope>NUCLEOTIDE SEQUENCE [LARGE SCALE GENOMIC DNA]</scope>
    <source>
        <strain>cv. BTx623</strain>
    </source>
</reference>
<reference key="2">
    <citation type="journal article" date="2018" name="Plant J.">
        <title>The Sorghum bicolor reference genome: improved assembly, gene annotations, a transcriptome atlas, and signatures of genome organization.</title>
        <authorList>
            <person name="McCormick R.F."/>
            <person name="Truong S.K."/>
            <person name="Sreedasyam A."/>
            <person name="Jenkins J."/>
            <person name="Shu S."/>
            <person name="Sims D."/>
            <person name="Kennedy M."/>
            <person name="Amirebrahimi M."/>
            <person name="Weers B.D."/>
            <person name="McKinley B."/>
            <person name="Mattison A."/>
            <person name="Morishige D.T."/>
            <person name="Grimwood J."/>
            <person name="Schmutz J."/>
            <person name="Mullet J.E."/>
        </authorList>
    </citation>
    <scope>GENOME REANNOTATION</scope>
    <source>
        <strain>cv. BTx623</strain>
    </source>
</reference>
<dbReference type="EC" id="6.3.5.7" evidence="1"/>
<dbReference type="EMBL" id="CM000765">
    <property type="protein sequence ID" value="EES11532.1"/>
    <property type="molecule type" value="Genomic_DNA"/>
</dbReference>
<dbReference type="SMR" id="C5Y8Z8"/>
<dbReference type="FunCoup" id="C5Y8Z8">
    <property type="interactions" value="1353"/>
</dbReference>
<dbReference type="STRING" id="4558.C5Y8Z8"/>
<dbReference type="EnsemblPlants" id="EES11532">
    <property type="protein sequence ID" value="EES11532"/>
    <property type="gene ID" value="SORBI_3006G237100"/>
</dbReference>
<dbReference type="GeneID" id="8079563"/>
<dbReference type="Gramene" id="EES11532">
    <property type="protein sequence ID" value="EES11532"/>
    <property type="gene ID" value="SORBI_3006G237100"/>
</dbReference>
<dbReference type="KEGG" id="sbi:8079563"/>
<dbReference type="eggNOG" id="KOG1211">
    <property type="taxonomic scope" value="Eukaryota"/>
</dbReference>
<dbReference type="HOGENOM" id="CLU_009600_0_3_1"/>
<dbReference type="InParanoid" id="C5Y8Z8"/>
<dbReference type="OMA" id="QPASYCG"/>
<dbReference type="OrthoDB" id="421993at2759"/>
<dbReference type="Proteomes" id="UP000000768">
    <property type="component" value="Chromosome 6"/>
</dbReference>
<dbReference type="GO" id="GO:0009570">
    <property type="term" value="C:chloroplast stroma"/>
    <property type="evidence" value="ECO:0007669"/>
    <property type="project" value="UniProtKB-SubCell"/>
</dbReference>
<dbReference type="GO" id="GO:0030956">
    <property type="term" value="C:glutamyl-tRNA(Gln) amidotransferase complex"/>
    <property type="evidence" value="ECO:0007669"/>
    <property type="project" value="UniProtKB-UniRule"/>
</dbReference>
<dbReference type="GO" id="GO:0005739">
    <property type="term" value="C:mitochondrion"/>
    <property type="evidence" value="ECO:0007669"/>
    <property type="project" value="UniProtKB-SubCell"/>
</dbReference>
<dbReference type="GO" id="GO:0005524">
    <property type="term" value="F:ATP binding"/>
    <property type="evidence" value="ECO:0007669"/>
    <property type="project" value="UniProtKB-KW"/>
</dbReference>
<dbReference type="GO" id="GO:0050567">
    <property type="term" value="F:glutaminyl-tRNA synthase (glutamine-hydrolyzing) activity"/>
    <property type="evidence" value="ECO:0000318"/>
    <property type="project" value="GO_Central"/>
</dbReference>
<dbReference type="GO" id="GO:0016811">
    <property type="term" value="F:hydrolase activity, acting on carbon-nitrogen (but not peptide) bonds, in linear amides"/>
    <property type="evidence" value="ECO:0007669"/>
    <property type="project" value="UniProtKB-ARBA"/>
</dbReference>
<dbReference type="GO" id="GO:0070681">
    <property type="term" value="P:glutaminyl-tRNAGln biosynthesis via transamidation"/>
    <property type="evidence" value="ECO:0007669"/>
    <property type="project" value="UniProtKB-UniRule"/>
</dbReference>
<dbReference type="GO" id="GO:0032543">
    <property type="term" value="P:mitochondrial translation"/>
    <property type="evidence" value="ECO:0007669"/>
    <property type="project" value="UniProtKB-UniRule"/>
</dbReference>
<dbReference type="Gene3D" id="3.90.1300.10">
    <property type="entry name" value="Amidase signature (AS) domain"/>
    <property type="match status" value="1"/>
</dbReference>
<dbReference type="HAMAP" id="MF_00120">
    <property type="entry name" value="GatA"/>
    <property type="match status" value="1"/>
</dbReference>
<dbReference type="InterPro" id="IPR000120">
    <property type="entry name" value="Amidase"/>
</dbReference>
<dbReference type="InterPro" id="IPR020556">
    <property type="entry name" value="Amidase_CS"/>
</dbReference>
<dbReference type="InterPro" id="IPR023631">
    <property type="entry name" value="Amidase_dom"/>
</dbReference>
<dbReference type="InterPro" id="IPR036928">
    <property type="entry name" value="AS_sf"/>
</dbReference>
<dbReference type="InterPro" id="IPR004412">
    <property type="entry name" value="GatA"/>
</dbReference>
<dbReference type="NCBIfam" id="TIGR00132">
    <property type="entry name" value="gatA"/>
    <property type="match status" value="1"/>
</dbReference>
<dbReference type="PANTHER" id="PTHR11895:SF7">
    <property type="entry name" value="GLUTAMYL-TRNA(GLN) AMIDOTRANSFERASE SUBUNIT A, MITOCHONDRIAL"/>
    <property type="match status" value="1"/>
</dbReference>
<dbReference type="PANTHER" id="PTHR11895">
    <property type="entry name" value="TRANSAMIDASE"/>
    <property type="match status" value="1"/>
</dbReference>
<dbReference type="Pfam" id="PF01425">
    <property type="entry name" value="Amidase"/>
    <property type="match status" value="1"/>
</dbReference>
<dbReference type="SUPFAM" id="SSF75304">
    <property type="entry name" value="Amidase signature (AS) enzymes"/>
    <property type="match status" value="1"/>
</dbReference>
<dbReference type="PROSITE" id="PS00571">
    <property type="entry name" value="AMIDASES"/>
    <property type="match status" value="1"/>
</dbReference>
<accession>C5Y8Z8</accession>
<sequence>MPPPLQAHRLLISHRRLPSPARRRFTAASSLQSAPATTLAPGPATSSILSIRESLLSGERTAADITSEYLSRLRRTEPSLRSFIHVADAAAEREAEELDRRIASGEKDAVGPLAGVLVGVKDNLCTANMPSTGGSRILDGYRPAYDATAVRRLQEAGAIVVGKTNLDEFGMGSTTEGSAFQVTTNPWDDSRVPGGSSGGSASAVSARQCVVSLGSDTGGSVRQPASFCGVVGLKPTYGRVSRFGLMAYASSLDVVGCFGSSVFDTATILSVVAGHDKMDSTSSSQVVPDYASELVSLDLLESKPLAGLRIGIIQETLGEGVANGVISSIKGAASHLEQLGSVVEEVSLPSFSLGLPAYYILASSEASSNLSRYDGIRYGRQFSADDLNELYGESRANGLGHEVKMRILMGTYALSAGYYDAYYKRAQQVRTLVKESFKDALERYDILISPAAPSAAYKIGEKINDPLAMYAGDILTVNVNLAGLPALVVPCGFVEGGPAGLPVGLQLIGSPFCEGNLLRVGHIFEQTLQNLSFVPPLLAES</sequence>
<organism>
    <name type="scientific">Sorghum bicolor</name>
    <name type="common">Sorghum</name>
    <name type="synonym">Sorghum vulgare</name>
    <dbReference type="NCBI Taxonomy" id="4558"/>
    <lineage>
        <taxon>Eukaryota</taxon>
        <taxon>Viridiplantae</taxon>
        <taxon>Streptophyta</taxon>
        <taxon>Embryophyta</taxon>
        <taxon>Tracheophyta</taxon>
        <taxon>Spermatophyta</taxon>
        <taxon>Magnoliopsida</taxon>
        <taxon>Liliopsida</taxon>
        <taxon>Poales</taxon>
        <taxon>Poaceae</taxon>
        <taxon>PACMAD clade</taxon>
        <taxon>Panicoideae</taxon>
        <taxon>Andropogonodae</taxon>
        <taxon>Andropogoneae</taxon>
        <taxon>Sorghinae</taxon>
        <taxon>Sorghum</taxon>
    </lineage>
</organism>
<gene>
    <name evidence="1" type="primary">GATA</name>
    <name type="ordered locus">Sb06g030390</name>
</gene>
<comment type="function">
    <text evidence="1">Allows the formation of correctly charged Gln-tRNA(Gln) through the transamidation of misacylated Glu-tRNA(Gln) in chloroplasts and mitochondria. The reaction takes place in the presence of glutamine and ATP through an activated gamma-phospho-Glu-tRNA(Gln).</text>
</comment>
<comment type="catalytic activity">
    <reaction evidence="1">
        <text>L-glutamyl-tRNA(Gln) + L-glutamine + ATP + H2O = L-glutaminyl-tRNA(Gln) + L-glutamate + ADP + phosphate + H(+)</text>
        <dbReference type="Rhea" id="RHEA:17521"/>
        <dbReference type="Rhea" id="RHEA-COMP:9681"/>
        <dbReference type="Rhea" id="RHEA-COMP:9684"/>
        <dbReference type="ChEBI" id="CHEBI:15377"/>
        <dbReference type="ChEBI" id="CHEBI:15378"/>
        <dbReference type="ChEBI" id="CHEBI:29985"/>
        <dbReference type="ChEBI" id="CHEBI:30616"/>
        <dbReference type="ChEBI" id="CHEBI:43474"/>
        <dbReference type="ChEBI" id="CHEBI:58359"/>
        <dbReference type="ChEBI" id="CHEBI:78520"/>
        <dbReference type="ChEBI" id="CHEBI:78521"/>
        <dbReference type="ChEBI" id="CHEBI:456216"/>
        <dbReference type="EC" id="6.3.5.7"/>
    </reaction>
</comment>
<comment type="subunit">
    <text evidence="1">Subunit of the heterotrimeric GatCAB amidotransferase (AdT) complex, composed of A, B and C subunits.</text>
</comment>
<comment type="subcellular location">
    <subcellularLocation>
        <location evidence="1">Mitochondrion</location>
    </subcellularLocation>
    <subcellularLocation>
        <location evidence="1">Plastid</location>
        <location evidence="1">Chloroplast stroma</location>
    </subcellularLocation>
</comment>
<comment type="miscellaneous">
    <text evidence="1">This protein may be expected to contain an N-terminal transit peptide but none has been predicted.</text>
</comment>
<comment type="similarity">
    <text evidence="1">Belongs to the amidase family. GatA subfamily.</text>
</comment>
<name>GATA_SORBI</name>
<protein>
    <recommendedName>
        <fullName evidence="1">Glutamyl-tRNA(Gln) amidotransferase subunit A, chloroplastic/mitochondrial</fullName>
        <shortName evidence="1">Glu-AdT subunit A</shortName>
        <ecNumber evidence="1">6.3.5.7</ecNumber>
    </recommendedName>
</protein>
<proteinExistence type="inferred from homology"/>
<evidence type="ECO:0000255" key="1">
    <source>
        <dbReference type="HAMAP-Rule" id="MF_03150"/>
    </source>
</evidence>
<feature type="chain" id="PRO_0000413343" description="Glutamyl-tRNA(Gln) amidotransferase subunit A, chloroplastic/mitochondrial">
    <location>
        <begin position="1"/>
        <end position="541"/>
    </location>
</feature>
<feature type="active site" description="Charge relay system" evidence="1">
    <location>
        <position position="121"/>
    </location>
</feature>
<feature type="active site" description="Charge relay system" evidence="1">
    <location>
        <position position="196"/>
    </location>
</feature>
<feature type="active site" description="Acyl-ester intermediate" evidence="1">
    <location>
        <position position="220"/>
    </location>
</feature>
<keyword id="KW-0067">ATP-binding</keyword>
<keyword id="KW-0150">Chloroplast</keyword>
<keyword id="KW-0436">Ligase</keyword>
<keyword id="KW-0496">Mitochondrion</keyword>
<keyword id="KW-0547">Nucleotide-binding</keyword>
<keyword id="KW-0934">Plastid</keyword>
<keyword id="KW-0648">Protein biosynthesis</keyword>
<keyword id="KW-1185">Reference proteome</keyword>